<sequence length="360" mass="40483">MKTSMQSKLDQLTTRLAELNDLLSRENVTADLDQYRKLTREHAEIGPVVEHYAQWRQARADELAAQELLADASMRDFAEDELRGARDRMGRLAAELQTMLLPKDPNDERNIFVEIRAGTGGDESALFAGNLLRMYLRYAERQRWQVEMMSESPSDLGGYKEVIVRIAGYGAYSRLKFESGGHRVQRVPATETQGRIHTSACTVAVMPEADEIGEVEINPADLRIDTFRASGAGGQHINKTDSAVRVTHIPTGIVVECQDDRSQHKNKDRALKVLAARIKDKQYHEQHAKEAATRKSLIGSGDRSERIRTYNFPQGRMTDHRINLTLYKLEQIMDGDLDELIAALVSEHQAELLASLGDAE</sequence>
<gene>
    <name evidence="1" type="primary">prfA</name>
    <name type="ordered locus">BMASAVP1_0676</name>
</gene>
<evidence type="ECO:0000255" key="1">
    <source>
        <dbReference type="HAMAP-Rule" id="MF_00093"/>
    </source>
</evidence>
<protein>
    <recommendedName>
        <fullName evidence="1">Peptide chain release factor 1</fullName>
        <shortName evidence="1">RF-1</shortName>
    </recommendedName>
</protein>
<proteinExistence type="inferred from homology"/>
<keyword id="KW-0963">Cytoplasm</keyword>
<keyword id="KW-0488">Methylation</keyword>
<keyword id="KW-0648">Protein biosynthesis</keyword>
<comment type="function">
    <text evidence="1">Peptide chain release factor 1 directs the termination of translation in response to the peptide chain termination codons UAG and UAA.</text>
</comment>
<comment type="subcellular location">
    <subcellularLocation>
        <location evidence="1">Cytoplasm</location>
    </subcellularLocation>
</comment>
<comment type="PTM">
    <text evidence="1">Methylated by PrmC. Methylation increases the termination efficiency of RF1.</text>
</comment>
<comment type="similarity">
    <text evidence="1">Belongs to the prokaryotic/mitochondrial release factor family.</text>
</comment>
<dbReference type="EMBL" id="CP000525">
    <property type="protein sequence ID" value="ABM49178.1"/>
    <property type="molecule type" value="Genomic_DNA"/>
</dbReference>
<dbReference type="RefSeq" id="WP_004186862.1">
    <property type="nucleotide sequence ID" value="NC_008784.1"/>
</dbReference>
<dbReference type="SMR" id="A1UWC9"/>
<dbReference type="GeneID" id="92976802"/>
<dbReference type="KEGG" id="bmv:BMASAVP1_0676"/>
<dbReference type="HOGENOM" id="CLU_036856_0_1_4"/>
<dbReference type="GO" id="GO:0005737">
    <property type="term" value="C:cytoplasm"/>
    <property type="evidence" value="ECO:0007669"/>
    <property type="project" value="UniProtKB-SubCell"/>
</dbReference>
<dbReference type="GO" id="GO:0016149">
    <property type="term" value="F:translation release factor activity, codon specific"/>
    <property type="evidence" value="ECO:0007669"/>
    <property type="project" value="UniProtKB-UniRule"/>
</dbReference>
<dbReference type="FunFam" id="3.30.160.20:FF:000004">
    <property type="entry name" value="Peptide chain release factor 1"/>
    <property type="match status" value="1"/>
</dbReference>
<dbReference type="FunFam" id="3.30.70.1660:FF:000002">
    <property type="entry name" value="Peptide chain release factor 1"/>
    <property type="match status" value="1"/>
</dbReference>
<dbReference type="FunFam" id="3.30.70.1660:FF:000004">
    <property type="entry name" value="Peptide chain release factor 1"/>
    <property type="match status" value="1"/>
</dbReference>
<dbReference type="Gene3D" id="3.30.160.20">
    <property type="match status" value="1"/>
</dbReference>
<dbReference type="Gene3D" id="3.30.70.1660">
    <property type="match status" value="1"/>
</dbReference>
<dbReference type="Gene3D" id="6.10.140.1950">
    <property type="match status" value="1"/>
</dbReference>
<dbReference type="HAMAP" id="MF_00093">
    <property type="entry name" value="Rel_fac_1"/>
    <property type="match status" value="1"/>
</dbReference>
<dbReference type="InterPro" id="IPR005139">
    <property type="entry name" value="PCRF"/>
</dbReference>
<dbReference type="InterPro" id="IPR000352">
    <property type="entry name" value="Pep_chain_release_fac_I"/>
</dbReference>
<dbReference type="InterPro" id="IPR045853">
    <property type="entry name" value="Pep_chain_release_fac_I_sf"/>
</dbReference>
<dbReference type="InterPro" id="IPR050057">
    <property type="entry name" value="Prokaryotic/Mito_RF"/>
</dbReference>
<dbReference type="InterPro" id="IPR004373">
    <property type="entry name" value="RF-1"/>
</dbReference>
<dbReference type="NCBIfam" id="TIGR00019">
    <property type="entry name" value="prfA"/>
    <property type="match status" value="1"/>
</dbReference>
<dbReference type="NCBIfam" id="NF001859">
    <property type="entry name" value="PRK00591.1"/>
    <property type="match status" value="1"/>
</dbReference>
<dbReference type="PANTHER" id="PTHR43804">
    <property type="entry name" value="LD18447P"/>
    <property type="match status" value="1"/>
</dbReference>
<dbReference type="PANTHER" id="PTHR43804:SF7">
    <property type="entry name" value="LD18447P"/>
    <property type="match status" value="1"/>
</dbReference>
<dbReference type="Pfam" id="PF03462">
    <property type="entry name" value="PCRF"/>
    <property type="match status" value="1"/>
</dbReference>
<dbReference type="Pfam" id="PF00472">
    <property type="entry name" value="RF-1"/>
    <property type="match status" value="1"/>
</dbReference>
<dbReference type="SMART" id="SM00937">
    <property type="entry name" value="PCRF"/>
    <property type="match status" value="1"/>
</dbReference>
<dbReference type="SUPFAM" id="SSF75620">
    <property type="entry name" value="Release factor"/>
    <property type="match status" value="1"/>
</dbReference>
<dbReference type="PROSITE" id="PS00745">
    <property type="entry name" value="RF_PROK_I"/>
    <property type="match status" value="1"/>
</dbReference>
<reference key="1">
    <citation type="journal article" date="2010" name="Genome Biol. Evol.">
        <title>Continuing evolution of Burkholderia mallei through genome reduction and large-scale rearrangements.</title>
        <authorList>
            <person name="Losada L."/>
            <person name="Ronning C.M."/>
            <person name="DeShazer D."/>
            <person name="Woods D."/>
            <person name="Fedorova N."/>
            <person name="Kim H.S."/>
            <person name="Shabalina S.A."/>
            <person name="Pearson T.R."/>
            <person name="Brinkac L."/>
            <person name="Tan P."/>
            <person name="Nandi T."/>
            <person name="Crabtree J."/>
            <person name="Badger J."/>
            <person name="Beckstrom-Sternberg S."/>
            <person name="Saqib M."/>
            <person name="Schutzer S.E."/>
            <person name="Keim P."/>
            <person name="Nierman W.C."/>
        </authorList>
    </citation>
    <scope>NUCLEOTIDE SEQUENCE [LARGE SCALE GENOMIC DNA]</scope>
    <source>
        <strain>SAVP1</strain>
    </source>
</reference>
<name>RF1_BURMS</name>
<organism>
    <name type="scientific">Burkholderia mallei (strain SAVP1)</name>
    <dbReference type="NCBI Taxonomy" id="320388"/>
    <lineage>
        <taxon>Bacteria</taxon>
        <taxon>Pseudomonadati</taxon>
        <taxon>Pseudomonadota</taxon>
        <taxon>Betaproteobacteria</taxon>
        <taxon>Burkholderiales</taxon>
        <taxon>Burkholderiaceae</taxon>
        <taxon>Burkholderia</taxon>
        <taxon>pseudomallei group</taxon>
    </lineage>
</organism>
<feature type="chain" id="PRO_1000004866" description="Peptide chain release factor 1">
    <location>
        <begin position="1"/>
        <end position="360"/>
    </location>
</feature>
<feature type="modified residue" description="N5-methylglutamine" evidence="1">
    <location>
        <position position="235"/>
    </location>
</feature>
<accession>A1UWC9</accession>